<protein>
    <recommendedName>
        <fullName>NADPH-dependent oxidoreductase</fullName>
        <ecNumber>1.6.-.-</ecNumber>
    </recommendedName>
</protein>
<feature type="chain" id="PRO_0000239722" description="NADPH-dependent oxidoreductase">
    <location>
        <begin position="1"/>
        <end position="251"/>
    </location>
</feature>
<dbReference type="EC" id="1.6.-.-"/>
<dbReference type="EMBL" id="CP000046">
    <property type="protein sequence ID" value="AAW38920.1"/>
    <property type="molecule type" value="Genomic_DNA"/>
</dbReference>
<dbReference type="SMR" id="Q5HIR4"/>
<dbReference type="KEGG" id="sac:SACOL0453"/>
<dbReference type="HOGENOM" id="CLU_070764_0_0_9"/>
<dbReference type="Proteomes" id="UP000000530">
    <property type="component" value="Chromosome"/>
</dbReference>
<dbReference type="GO" id="GO:0016491">
    <property type="term" value="F:oxidoreductase activity"/>
    <property type="evidence" value="ECO:0007669"/>
    <property type="project" value="UniProtKB-KW"/>
</dbReference>
<dbReference type="CDD" id="cd02146">
    <property type="entry name" value="NfsA-like"/>
    <property type="match status" value="1"/>
</dbReference>
<dbReference type="Gene3D" id="3.40.109.10">
    <property type="entry name" value="NADH Oxidase"/>
    <property type="match status" value="1"/>
</dbReference>
<dbReference type="InterPro" id="IPR016446">
    <property type="entry name" value="Flavin_OxRdtase_Frp"/>
</dbReference>
<dbReference type="InterPro" id="IPR029479">
    <property type="entry name" value="Nitroreductase"/>
</dbReference>
<dbReference type="InterPro" id="IPR000415">
    <property type="entry name" value="Nitroreductase-like"/>
</dbReference>
<dbReference type="NCBIfam" id="NF008033">
    <property type="entry name" value="PRK10765.1"/>
    <property type="match status" value="1"/>
</dbReference>
<dbReference type="PANTHER" id="PTHR43425:SF3">
    <property type="entry name" value="NADPH-DEPENDENT OXIDOREDUCTASE"/>
    <property type="match status" value="1"/>
</dbReference>
<dbReference type="PANTHER" id="PTHR43425">
    <property type="entry name" value="OXYGEN-INSENSITIVE NADPH NITROREDUCTASE"/>
    <property type="match status" value="1"/>
</dbReference>
<dbReference type="Pfam" id="PF00881">
    <property type="entry name" value="Nitroreductase"/>
    <property type="match status" value="1"/>
</dbReference>
<dbReference type="PIRSF" id="PIRSF005426">
    <property type="entry name" value="Frp"/>
    <property type="match status" value="1"/>
</dbReference>
<dbReference type="SUPFAM" id="SSF55469">
    <property type="entry name" value="FMN-dependent nitroreductase-like"/>
    <property type="match status" value="1"/>
</dbReference>
<organism>
    <name type="scientific">Staphylococcus aureus (strain COL)</name>
    <dbReference type="NCBI Taxonomy" id="93062"/>
    <lineage>
        <taxon>Bacteria</taxon>
        <taxon>Bacillati</taxon>
        <taxon>Bacillota</taxon>
        <taxon>Bacilli</taxon>
        <taxon>Bacillales</taxon>
        <taxon>Staphylococcaceae</taxon>
        <taxon>Staphylococcus</taxon>
    </lineage>
</organism>
<comment type="function">
    <text evidence="1">Reduces FMN, organic nitro compounds and disulfide DTNB. Involved in maintenance of the cellular redox state and the disulfide stress response (By similarity).</text>
</comment>
<comment type="cofactor">
    <cofactor evidence="1">
        <name>FMN</name>
        <dbReference type="ChEBI" id="CHEBI:58210"/>
    </cofactor>
</comment>
<comment type="similarity">
    <text evidence="2">Belongs to the flavin oxidoreductase frp family.</text>
</comment>
<gene>
    <name type="primary">nfrA</name>
    <name type="ordered locus">SACOL0453</name>
</gene>
<proteinExistence type="inferred from homology"/>
<keyword id="KW-0285">Flavoprotein</keyword>
<keyword id="KW-0288">FMN</keyword>
<keyword id="KW-0521">NADP</keyword>
<keyword id="KW-0560">Oxidoreductase</keyword>
<accession>Q5HIR4</accession>
<sequence>MSEHVYNLVKKHHSVRKFKNKPLSEDVVKKLVEAGQSASTSSFLQAYSIIGIDDEKIKENLREVSGQPYVVENGYLFVFVIDYYRHHLVDQHAETDMENAYGSTEGLLVGAIDAALVAENIAVTAEDMGYGIVFLGSLRNDVERVREILDLPDYVFPVFGMAVGEPADDENGAAKPRLPFDHVFHHNKYHADKETQYAQMADYDQTISEYYDQRTNGNRKETWSQQIEMFLGNKARLDMLEQLQKSGLIQR</sequence>
<reference key="1">
    <citation type="journal article" date="2005" name="J. Bacteriol.">
        <title>Insights on evolution of virulence and resistance from the complete genome analysis of an early methicillin-resistant Staphylococcus aureus strain and a biofilm-producing methicillin-resistant Staphylococcus epidermidis strain.</title>
        <authorList>
            <person name="Gill S.R."/>
            <person name="Fouts D.E."/>
            <person name="Archer G.L."/>
            <person name="Mongodin E.F."/>
            <person name="DeBoy R.T."/>
            <person name="Ravel J."/>
            <person name="Paulsen I.T."/>
            <person name="Kolonay J.F."/>
            <person name="Brinkac L.M."/>
            <person name="Beanan M.J."/>
            <person name="Dodson R.J."/>
            <person name="Daugherty S.C."/>
            <person name="Madupu R."/>
            <person name="Angiuoli S.V."/>
            <person name="Durkin A.S."/>
            <person name="Haft D.H."/>
            <person name="Vamathevan J.J."/>
            <person name="Khouri H."/>
            <person name="Utterback T.R."/>
            <person name="Lee C."/>
            <person name="Dimitrov G."/>
            <person name="Jiang L."/>
            <person name="Qin H."/>
            <person name="Weidman J."/>
            <person name="Tran K."/>
            <person name="Kang K.H."/>
            <person name="Hance I.R."/>
            <person name="Nelson K.E."/>
            <person name="Fraser C.M."/>
        </authorList>
    </citation>
    <scope>NUCLEOTIDE SEQUENCE [LARGE SCALE GENOMIC DNA]</scope>
    <source>
        <strain>COL</strain>
    </source>
</reference>
<evidence type="ECO:0000250" key="1"/>
<evidence type="ECO:0000305" key="2"/>
<name>NFRA_STAAC</name>